<keyword id="KW-0106">Calcium</keyword>
<keyword id="KW-0256">Endoplasmic reticulum</keyword>
<keyword id="KW-0325">Glycoprotein</keyword>
<keyword id="KW-0472">Membrane</keyword>
<keyword id="KW-0597">Phosphoprotein</keyword>
<keyword id="KW-1185">Reference proteome</keyword>
<keyword id="KW-0732">Signal</keyword>
<keyword id="KW-0812">Transmembrane</keyword>
<keyword id="KW-1133">Transmembrane helix</keyword>
<proteinExistence type="evidence at protein level"/>
<accession>Q9CY50</accession>
<accession>Q3TIM3</accession>
<accession>Q99MP2</accession>
<name>SSRA_MOUSE</name>
<comment type="function">
    <text>TRAP proteins are part of a complex whose function is to bind calcium to the ER membrane and thereby regulate the retention of ER resident proteins. May be involved in the recycling of the translocation apparatus after completion of the translocation process or may function as a membrane-bound chaperone facilitating folding of translocated proteins.</text>
</comment>
<comment type="subunit">
    <text evidence="1">Heterotetramer of TRAP-alpha, TRAP-beta, TRAP-delta and TRAP-gamma. Interacts with palmitoylated calnexin (CALX), the interaction is required for efficient folding of glycosylated proteins (By similarity).</text>
</comment>
<comment type="subcellular location">
    <subcellularLocation>
        <location evidence="1">Endoplasmic reticulum membrane</location>
        <topology evidence="1">Single-pass type I membrane protein</topology>
    </subcellularLocation>
</comment>
<comment type="domain">
    <text>Shows a remarkable charge distribution with the N-terminus being highly negatively charged, and the cytoplasmic C-terminus positively charged.</text>
</comment>
<comment type="miscellaneous">
    <text evidence="1">Seems to bind calcium.</text>
</comment>
<comment type="similarity">
    <text evidence="6">Belongs to the TRAP-alpha family.</text>
</comment>
<dbReference type="EMBL" id="AF326229">
    <property type="protein sequence ID" value="AAK16151.2"/>
    <property type="molecule type" value="mRNA"/>
</dbReference>
<dbReference type="EMBL" id="AF395811">
    <property type="protein sequence ID" value="AAK82421.1"/>
    <property type="molecule type" value="mRNA"/>
</dbReference>
<dbReference type="EMBL" id="AK010884">
    <property type="protein sequence ID" value="BAB27245.1"/>
    <property type="molecule type" value="mRNA"/>
</dbReference>
<dbReference type="EMBL" id="AK166235">
    <property type="protein sequence ID" value="BAE38650.1"/>
    <property type="molecule type" value="mRNA"/>
</dbReference>
<dbReference type="EMBL" id="AK167793">
    <property type="protein sequence ID" value="BAE39823.1"/>
    <property type="molecule type" value="mRNA"/>
</dbReference>
<dbReference type="EMBL" id="BC011255">
    <property type="protein sequence ID" value="AAH11255.1"/>
    <property type="molecule type" value="mRNA"/>
</dbReference>
<dbReference type="CCDS" id="CCDS26459.1"/>
<dbReference type="RefSeq" id="NP_080241.3">
    <property type="nucleotide sequence ID" value="NM_025965.3"/>
</dbReference>
<dbReference type="SMR" id="Q9CY50"/>
<dbReference type="BioGRID" id="223355">
    <property type="interactions" value="9"/>
</dbReference>
<dbReference type="FunCoup" id="Q9CY50">
    <property type="interactions" value="3156"/>
</dbReference>
<dbReference type="IntAct" id="Q9CY50">
    <property type="interactions" value="4"/>
</dbReference>
<dbReference type="MINT" id="Q9CY50"/>
<dbReference type="STRING" id="10090.ENSMUSP00000021864"/>
<dbReference type="GlyConnect" id="2779">
    <property type="glycosylation" value="5 N-Linked glycans (1 site)"/>
</dbReference>
<dbReference type="GlyCosmos" id="Q9CY50">
    <property type="glycosylation" value="2 sites, 5 glycans"/>
</dbReference>
<dbReference type="GlyGen" id="Q9CY50">
    <property type="glycosylation" value="2 sites, 7 N-linked glycans (2 sites)"/>
</dbReference>
<dbReference type="iPTMnet" id="Q9CY50"/>
<dbReference type="PhosphoSitePlus" id="Q9CY50"/>
<dbReference type="CPTAC" id="non-CPTAC-3879"/>
<dbReference type="jPOST" id="Q9CY50"/>
<dbReference type="PaxDb" id="10090-ENSMUSP00000021864"/>
<dbReference type="ProteomicsDB" id="257421"/>
<dbReference type="Pumba" id="Q9CY50"/>
<dbReference type="TopDownProteomics" id="Q9CY50"/>
<dbReference type="Antibodypedia" id="2405">
    <property type="antibodies" value="270 antibodies from 30 providers"/>
</dbReference>
<dbReference type="DNASU" id="107513"/>
<dbReference type="Ensembl" id="ENSMUST00000021864.8">
    <property type="protein sequence ID" value="ENSMUSP00000021864.7"/>
    <property type="gene ID" value="ENSMUSG00000021427.11"/>
</dbReference>
<dbReference type="GeneID" id="107513"/>
<dbReference type="KEGG" id="mmu:107513"/>
<dbReference type="UCSC" id="uc011yyk.1">
    <property type="organism name" value="mouse"/>
</dbReference>
<dbReference type="AGR" id="MGI:105082"/>
<dbReference type="CTD" id="6745"/>
<dbReference type="MGI" id="MGI:105082">
    <property type="gene designation" value="Ssr1"/>
</dbReference>
<dbReference type="VEuPathDB" id="HostDB:ENSMUSG00000021427"/>
<dbReference type="eggNOG" id="KOG1631">
    <property type="taxonomic scope" value="Eukaryota"/>
</dbReference>
<dbReference type="GeneTree" id="ENSGT00400000022103"/>
<dbReference type="HOGENOM" id="CLU_073618_0_0_1"/>
<dbReference type="InParanoid" id="Q9CY50"/>
<dbReference type="OMA" id="TFPYSFT"/>
<dbReference type="PhylomeDB" id="Q9CY50"/>
<dbReference type="TreeFam" id="TF321074"/>
<dbReference type="BioGRID-ORCS" id="107513">
    <property type="hits" value="2 hits in 77 CRISPR screens"/>
</dbReference>
<dbReference type="ChiTaRS" id="Ssr1">
    <property type="organism name" value="mouse"/>
</dbReference>
<dbReference type="PRO" id="PR:Q9CY50"/>
<dbReference type="Proteomes" id="UP000000589">
    <property type="component" value="Chromosome 13"/>
</dbReference>
<dbReference type="RNAct" id="Q9CY50">
    <property type="molecule type" value="protein"/>
</dbReference>
<dbReference type="Bgee" id="ENSMUSG00000021427">
    <property type="expression patterns" value="Expressed in vault of skull and 295 other cell types or tissues"/>
</dbReference>
<dbReference type="ExpressionAtlas" id="Q9CY50">
    <property type="expression patterns" value="baseline and differential"/>
</dbReference>
<dbReference type="GO" id="GO:0005783">
    <property type="term" value="C:endoplasmic reticulum"/>
    <property type="evidence" value="ECO:0000314"/>
    <property type="project" value="MGI"/>
</dbReference>
<dbReference type="GO" id="GO:0005789">
    <property type="term" value="C:endoplasmic reticulum membrane"/>
    <property type="evidence" value="ECO:0007669"/>
    <property type="project" value="UniProtKB-SubCell"/>
</dbReference>
<dbReference type="InterPro" id="IPR005595">
    <property type="entry name" value="TRAP_alpha"/>
</dbReference>
<dbReference type="PANTHER" id="PTHR12924:SF0">
    <property type="entry name" value="TRANSLOCON-ASSOCIATED PROTEIN SUBUNIT ALPHA"/>
    <property type="match status" value="1"/>
</dbReference>
<dbReference type="PANTHER" id="PTHR12924">
    <property type="entry name" value="TRANSLOCON-ASSOCIATED PROTEIN, ALPHA SUBUNIT"/>
    <property type="match status" value="1"/>
</dbReference>
<dbReference type="Pfam" id="PF03896">
    <property type="entry name" value="TRAP_alpha"/>
    <property type="match status" value="1"/>
</dbReference>
<reference key="1">
    <citation type="submission" date="2001-06" db="EMBL/GenBank/DDBJ databases">
        <title>Mus musculus TRAP alpha cDNA.</title>
        <authorList>
            <person name="Mesbah K."/>
            <person name="Babinet C."/>
            <person name="Barra J."/>
        </authorList>
    </citation>
    <scope>NUCLEOTIDE SEQUENCE [MRNA]</scope>
    <source>
        <strain>BALB/cJ</strain>
    </source>
</reference>
<reference key="2">
    <citation type="journal article" date="2005" name="Science">
        <title>The transcriptional landscape of the mammalian genome.</title>
        <authorList>
            <person name="Carninci P."/>
            <person name="Kasukawa T."/>
            <person name="Katayama S."/>
            <person name="Gough J."/>
            <person name="Frith M.C."/>
            <person name="Maeda N."/>
            <person name="Oyama R."/>
            <person name="Ravasi T."/>
            <person name="Lenhard B."/>
            <person name="Wells C."/>
            <person name="Kodzius R."/>
            <person name="Shimokawa K."/>
            <person name="Bajic V.B."/>
            <person name="Brenner S.E."/>
            <person name="Batalov S."/>
            <person name="Forrest A.R."/>
            <person name="Zavolan M."/>
            <person name="Davis M.J."/>
            <person name="Wilming L.G."/>
            <person name="Aidinis V."/>
            <person name="Allen J.E."/>
            <person name="Ambesi-Impiombato A."/>
            <person name="Apweiler R."/>
            <person name="Aturaliya R.N."/>
            <person name="Bailey T.L."/>
            <person name="Bansal M."/>
            <person name="Baxter L."/>
            <person name="Beisel K.W."/>
            <person name="Bersano T."/>
            <person name="Bono H."/>
            <person name="Chalk A.M."/>
            <person name="Chiu K.P."/>
            <person name="Choudhary V."/>
            <person name="Christoffels A."/>
            <person name="Clutterbuck D.R."/>
            <person name="Crowe M.L."/>
            <person name="Dalla E."/>
            <person name="Dalrymple B.P."/>
            <person name="de Bono B."/>
            <person name="Della Gatta G."/>
            <person name="di Bernardo D."/>
            <person name="Down T."/>
            <person name="Engstrom P."/>
            <person name="Fagiolini M."/>
            <person name="Faulkner G."/>
            <person name="Fletcher C.F."/>
            <person name="Fukushima T."/>
            <person name="Furuno M."/>
            <person name="Futaki S."/>
            <person name="Gariboldi M."/>
            <person name="Georgii-Hemming P."/>
            <person name="Gingeras T.R."/>
            <person name="Gojobori T."/>
            <person name="Green R.E."/>
            <person name="Gustincich S."/>
            <person name="Harbers M."/>
            <person name="Hayashi Y."/>
            <person name="Hensch T.K."/>
            <person name="Hirokawa N."/>
            <person name="Hill D."/>
            <person name="Huminiecki L."/>
            <person name="Iacono M."/>
            <person name="Ikeo K."/>
            <person name="Iwama A."/>
            <person name="Ishikawa T."/>
            <person name="Jakt M."/>
            <person name="Kanapin A."/>
            <person name="Katoh M."/>
            <person name="Kawasawa Y."/>
            <person name="Kelso J."/>
            <person name="Kitamura H."/>
            <person name="Kitano H."/>
            <person name="Kollias G."/>
            <person name="Krishnan S.P."/>
            <person name="Kruger A."/>
            <person name="Kummerfeld S.K."/>
            <person name="Kurochkin I.V."/>
            <person name="Lareau L.F."/>
            <person name="Lazarevic D."/>
            <person name="Lipovich L."/>
            <person name="Liu J."/>
            <person name="Liuni S."/>
            <person name="McWilliam S."/>
            <person name="Madan Babu M."/>
            <person name="Madera M."/>
            <person name="Marchionni L."/>
            <person name="Matsuda H."/>
            <person name="Matsuzawa S."/>
            <person name="Miki H."/>
            <person name="Mignone F."/>
            <person name="Miyake S."/>
            <person name="Morris K."/>
            <person name="Mottagui-Tabar S."/>
            <person name="Mulder N."/>
            <person name="Nakano N."/>
            <person name="Nakauchi H."/>
            <person name="Ng P."/>
            <person name="Nilsson R."/>
            <person name="Nishiguchi S."/>
            <person name="Nishikawa S."/>
            <person name="Nori F."/>
            <person name="Ohara O."/>
            <person name="Okazaki Y."/>
            <person name="Orlando V."/>
            <person name="Pang K.C."/>
            <person name="Pavan W.J."/>
            <person name="Pavesi G."/>
            <person name="Pesole G."/>
            <person name="Petrovsky N."/>
            <person name="Piazza S."/>
            <person name="Reed J."/>
            <person name="Reid J.F."/>
            <person name="Ring B.Z."/>
            <person name="Ringwald M."/>
            <person name="Rost B."/>
            <person name="Ruan Y."/>
            <person name="Salzberg S.L."/>
            <person name="Sandelin A."/>
            <person name="Schneider C."/>
            <person name="Schoenbach C."/>
            <person name="Sekiguchi K."/>
            <person name="Semple C.A."/>
            <person name="Seno S."/>
            <person name="Sessa L."/>
            <person name="Sheng Y."/>
            <person name="Shibata Y."/>
            <person name="Shimada H."/>
            <person name="Shimada K."/>
            <person name="Silva D."/>
            <person name="Sinclair B."/>
            <person name="Sperling S."/>
            <person name="Stupka E."/>
            <person name="Sugiura K."/>
            <person name="Sultana R."/>
            <person name="Takenaka Y."/>
            <person name="Taki K."/>
            <person name="Tammoja K."/>
            <person name="Tan S.L."/>
            <person name="Tang S."/>
            <person name="Taylor M.S."/>
            <person name="Tegner J."/>
            <person name="Teichmann S.A."/>
            <person name="Ueda H.R."/>
            <person name="van Nimwegen E."/>
            <person name="Verardo R."/>
            <person name="Wei C.L."/>
            <person name="Yagi K."/>
            <person name="Yamanishi H."/>
            <person name="Zabarovsky E."/>
            <person name="Zhu S."/>
            <person name="Zimmer A."/>
            <person name="Hide W."/>
            <person name="Bult C."/>
            <person name="Grimmond S.M."/>
            <person name="Teasdale R.D."/>
            <person name="Liu E.T."/>
            <person name="Brusic V."/>
            <person name="Quackenbush J."/>
            <person name="Wahlestedt C."/>
            <person name="Mattick J.S."/>
            <person name="Hume D.A."/>
            <person name="Kai C."/>
            <person name="Sasaki D."/>
            <person name="Tomaru Y."/>
            <person name="Fukuda S."/>
            <person name="Kanamori-Katayama M."/>
            <person name="Suzuki M."/>
            <person name="Aoki J."/>
            <person name="Arakawa T."/>
            <person name="Iida J."/>
            <person name="Imamura K."/>
            <person name="Itoh M."/>
            <person name="Kato T."/>
            <person name="Kawaji H."/>
            <person name="Kawagashira N."/>
            <person name="Kawashima T."/>
            <person name="Kojima M."/>
            <person name="Kondo S."/>
            <person name="Konno H."/>
            <person name="Nakano K."/>
            <person name="Ninomiya N."/>
            <person name="Nishio T."/>
            <person name="Okada M."/>
            <person name="Plessy C."/>
            <person name="Shibata K."/>
            <person name="Shiraki T."/>
            <person name="Suzuki S."/>
            <person name="Tagami M."/>
            <person name="Waki K."/>
            <person name="Watahiki A."/>
            <person name="Okamura-Oho Y."/>
            <person name="Suzuki H."/>
            <person name="Kawai J."/>
            <person name="Hayashizaki Y."/>
        </authorList>
    </citation>
    <scope>NUCLEOTIDE SEQUENCE [LARGE SCALE MRNA]</scope>
    <source>
        <strain>C57BL/6J</strain>
        <strain>DBA/2J</strain>
        <tissue>Embryonic liver</tissue>
        <tissue>Mammary gland</tissue>
    </source>
</reference>
<reference key="3">
    <citation type="journal article" date="2004" name="Genome Res.">
        <title>The status, quality, and expansion of the NIH full-length cDNA project: the Mammalian Gene Collection (MGC).</title>
        <authorList>
            <consortium name="The MGC Project Team"/>
        </authorList>
    </citation>
    <scope>NUCLEOTIDE SEQUENCE [LARGE SCALE MRNA]</scope>
    <source>
        <strain>Czech II</strain>
        <tissue>Mammary tumor</tissue>
    </source>
</reference>
<reference key="4">
    <citation type="journal article" date="2008" name="J. Proteome Res.">
        <title>Specific phosphopeptide enrichment with immobilized titanium ion affinity chromatography adsorbent for phosphoproteome analysis.</title>
        <authorList>
            <person name="Zhou H."/>
            <person name="Ye M."/>
            <person name="Dong J."/>
            <person name="Han G."/>
            <person name="Jiang X."/>
            <person name="Wu R."/>
            <person name="Zou H."/>
        </authorList>
    </citation>
    <scope>IDENTIFICATION BY MASS SPECTROMETRY [LARGE SCALE ANALYSIS]</scope>
    <source>
        <tissue>Liver</tissue>
    </source>
</reference>
<reference key="5">
    <citation type="journal article" date="2009" name="Immunity">
        <title>The phagosomal proteome in interferon-gamma-activated macrophages.</title>
        <authorList>
            <person name="Trost M."/>
            <person name="English L."/>
            <person name="Lemieux S."/>
            <person name="Courcelles M."/>
            <person name="Desjardins M."/>
            <person name="Thibault P."/>
        </authorList>
    </citation>
    <scope>PHOSPHORYLATION [LARGE SCALE ANALYSIS] AT SER-268</scope>
    <scope>IDENTIFICATION BY MASS SPECTROMETRY [LARGE SCALE ANALYSIS]</scope>
</reference>
<reference key="6">
    <citation type="journal article" date="2009" name="Mol. Cell. Proteomics">
        <title>The mouse C2C12 myoblast cell surface N-linked glycoproteome: identification, glycosite occupancy, and membrane orientation.</title>
        <authorList>
            <person name="Gundry R.L."/>
            <person name="Raginski K."/>
            <person name="Tarasova Y."/>
            <person name="Tchernyshyov I."/>
            <person name="Bausch-Fluck D."/>
            <person name="Elliott S.T."/>
            <person name="Boheler K.R."/>
            <person name="Van Eyk J.E."/>
            <person name="Wollscheid B."/>
        </authorList>
    </citation>
    <scope>GLYCOSYLATION [LARGE SCALE ANALYSIS] AT ASN-136</scope>
    <source>
        <tissue>Myoblast</tissue>
    </source>
</reference>
<reference key="7">
    <citation type="journal article" date="2009" name="Mol. Cell. Proteomics">
        <title>Large scale localization of protein phosphorylation by use of electron capture dissociation mass spectrometry.</title>
        <authorList>
            <person name="Sweet S.M."/>
            <person name="Bailey C.M."/>
            <person name="Cunningham D.L."/>
            <person name="Heath J.K."/>
            <person name="Cooper H.J."/>
        </authorList>
    </citation>
    <scope>PHOSPHORYLATION [LARGE SCALE ANALYSIS] AT SER-268</scope>
    <scope>IDENTIFICATION BY MASS SPECTROMETRY [LARGE SCALE ANALYSIS]</scope>
    <source>
        <tissue>Embryonic fibroblast</tissue>
    </source>
</reference>
<reference key="8">
    <citation type="journal article" date="2010" name="Cell">
        <title>A tissue-specific atlas of mouse protein phosphorylation and expression.</title>
        <authorList>
            <person name="Huttlin E.L."/>
            <person name="Jedrychowski M.P."/>
            <person name="Elias J.E."/>
            <person name="Goswami T."/>
            <person name="Rad R."/>
            <person name="Beausoleil S.A."/>
            <person name="Villen J."/>
            <person name="Haas W."/>
            <person name="Sowa M.E."/>
            <person name="Gygi S.P."/>
        </authorList>
    </citation>
    <scope>PHOSPHORYLATION [LARGE SCALE ANALYSIS] AT SER-268</scope>
    <scope>IDENTIFICATION BY MASS SPECTROMETRY [LARGE SCALE ANALYSIS]</scope>
    <source>
        <tissue>Brain</tissue>
        <tissue>Brown adipose tissue</tissue>
        <tissue>Heart</tissue>
        <tissue>Kidney</tissue>
        <tissue>Liver</tissue>
        <tissue>Lung</tissue>
        <tissue>Pancreas</tissue>
        <tissue>Spleen</tissue>
        <tissue>Testis</tissue>
    </source>
</reference>
<gene>
    <name type="primary">Ssr1</name>
</gene>
<feature type="signal peptide" evidence="3">
    <location>
        <begin position="1"/>
        <end position="21"/>
    </location>
</feature>
<feature type="chain" id="PRO_0000033282" description="Translocon-associated protein subunit alpha">
    <location>
        <begin position="22"/>
        <end position="286"/>
    </location>
</feature>
<feature type="topological domain" description="Lumenal" evidence="3">
    <location>
        <begin position="22"/>
        <end position="207"/>
    </location>
</feature>
<feature type="transmembrane region" description="Helical" evidence="3">
    <location>
        <begin position="208"/>
        <end position="228"/>
    </location>
</feature>
<feature type="topological domain" description="Cytoplasmic" evidence="3">
    <location>
        <begin position="229"/>
        <end position="286"/>
    </location>
</feature>
<feature type="region of interest" description="Disordered" evidence="4">
    <location>
        <begin position="46"/>
        <end position="83"/>
    </location>
</feature>
<feature type="region of interest" description="Disordered" evidence="4">
    <location>
        <begin position="236"/>
        <end position="286"/>
    </location>
</feature>
<feature type="compositionally biased region" description="Acidic residues" evidence="4">
    <location>
        <begin position="46"/>
        <end position="75"/>
    </location>
</feature>
<feature type="compositionally biased region" description="Polar residues" evidence="4">
    <location>
        <begin position="244"/>
        <end position="266"/>
    </location>
</feature>
<feature type="compositionally biased region" description="Basic residues" evidence="4">
    <location>
        <begin position="268"/>
        <end position="279"/>
    </location>
</feature>
<feature type="modified residue" description="Phosphoserine" evidence="2">
    <location>
        <position position="247"/>
    </location>
</feature>
<feature type="modified residue" description="Phosphothreonine" evidence="2">
    <location>
        <position position="260"/>
    </location>
</feature>
<feature type="modified residue" description="Phosphoserine" evidence="7 8 9">
    <location>
        <position position="268"/>
    </location>
</feature>
<feature type="glycosylation site" description="N-linked (GlcNAc...) asparagine" evidence="5">
    <location>
        <position position="136"/>
    </location>
</feature>
<feature type="glycosylation site" description="N-linked (GlcNAc...) asparagine" evidence="3">
    <location>
        <position position="191"/>
    </location>
</feature>
<feature type="sequence conflict" description="In Ref. 1; AAK16151/AAK82421." evidence="6" ref="1">
    <original>G</original>
    <variation>V</variation>
    <location>
        <position position="27"/>
    </location>
</feature>
<evidence type="ECO:0000250" key="1"/>
<evidence type="ECO:0000250" key="2">
    <source>
        <dbReference type="UniProtKB" id="P43307"/>
    </source>
</evidence>
<evidence type="ECO:0000255" key="3"/>
<evidence type="ECO:0000256" key="4">
    <source>
        <dbReference type="SAM" id="MobiDB-lite"/>
    </source>
</evidence>
<evidence type="ECO:0000269" key="5">
    <source>
    </source>
</evidence>
<evidence type="ECO:0000305" key="6"/>
<evidence type="ECO:0007744" key="7">
    <source>
    </source>
</evidence>
<evidence type="ECO:0007744" key="8">
    <source>
    </source>
</evidence>
<evidence type="ECO:0007744" key="9">
    <source>
    </source>
</evidence>
<protein>
    <recommendedName>
        <fullName>Translocon-associated protein subunit alpha</fullName>
        <shortName>TRAP-alpha</shortName>
    </recommendedName>
    <alternativeName>
        <fullName>Signal sequence receptor subunit alpha</fullName>
        <shortName>SSR-alpha</shortName>
    </alternativeName>
</protein>
<sequence>MRLLPRLLLLFLLAFPAAVLLRGGPGGSLALAQDPTEDEEIVEDSIIEDEDDEAEVEEDEPTDLAEDKEEEDVSSEPEASPSADTTILFVKGEDFPANNIVKFLVGFTNKGTEDFIVESLDASFRYPQDYQFYIQNFTALPLNTVVPPQRQATFEYSFIPAEPMGGRPFGLVINLNYKDLNGNVFQDAVFNQTVTVIEREDGLDGETIFMYMFLAGLGLLVVVGLHQLLESRKRKRPIQKVEMGTSSQNDVDMSWIPQETLNQINKASPRRQPRKRAQKRSVGSDE</sequence>
<organism>
    <name type="scientific">Mus musculus</name>
    <name type="common">Mouse</name>
    <dbReference type="NCBI Taxonomy" id="10090"/>
    <lineage>
        <taxon>Eukaryota</taxon>
        <taxon>Metazoa</taxon>
        <taxon>Chordata</taxon>
        <taxon>Craniata</taxon>
        <taxon>Vertebrata</taxon>
        <taxon>Euteleostomi</taxon>
        <taxon>Mammalia</taxon>
        <taxon>Eutheria</taxon>
        <taxon>Euarchontoglires</taxon>
        <taxon>Glires</taxon>
        <taxon>Rodentia</taxon>
        <taxon>Myomorpha</taxon>
        <taxon>Muroidea</taxon>
        <taxon>Muridae</taxon>
        <taxon>Murinae</taxon>
        <taxon>Mus</taxon>
        <taxon>Mus</taxon>
    </lineage>
</organism>